<proteinExistence type="inferred from homology"/>
<comment type="function">
    <text evidence="1">DNA ligase that catalyzes the formation of phosphodiester linkages between 5'-phosphoryl and 3'-hydroxyl groups in double-stranded DNA using NAD as a coenzyme and as the energy source for the reaction. It is essential for DNA replication and repair of damaged DNA.</text>
</comment>
<comment type="catalytic activity">
    <reaction evidence="1">
        <text>NAD(+) + (deoxyribonucleotide)n-3'-hydroxyl + 5'-phospho-(deoxyribonucleotide)m = (deoxyribonucleotide)n+m + AMP + beta-nicotinamide D-nucleotide.</text>
        <dbReference type="EC" id="6.5.1.2"/>
    </reaction>
</comment>
<comment type="cofactor">
    <cofactor evidence="1">
        <name>Mg(2+)</name>
        <dbReference type="ChEBI" id="CHEBI:18420"/>
    </cofactor>
    <cofactor evidence="1">
        <name>Mn(2+)</name>
        <dbReference type="ChEBI" id="CHEBI:29035"/>
    </cofactor>
</comment>
<comment type="similarity">
    <text evidence="1">Belongs to the NAD-dependent DNA ligase family. LigA subfamily.</text>
</comment>
<gene>
    <name evidence="1" type="primary">ligA</name>
    <name type="ordered locus">RSal33209_2942</name>
</gene>
<dbReference type="EC" id="6.5.1.2" evidence="1"/>
<dbReference type="EMBL" id="CP000910">
    <property type="protein sequence ID" value="ABY24664.1"/>
    <property type="molecule type" value="Genomic_DNA"/>
</dbReference>
<dbReference type="SMR" id="A9WTZ3"/>
<dbReference type="STRING" id="288705.RSal33209_2942"/>
<dbReference type="KEGG" id="rsa:RSal33209_2942"/>
<dbReference type="eggNOG" id="COG0272">
    <property type="taxonomic scope" value="Bacteria"/>
</dbReference>
<dbReference type="HOGENOM" id="CLU_007764_2_1_11"/>
<dbReference type="Proteomes" id="UP000002007">
    <property type="component" value="Chromosome"/>
</dbReference>
<dbReference type="GO" id="GO:0005829">
    <property type="term" value="C:cytosol"/>
    <property type="evidence" value="ECO:0007669"/>
    <property type="project" value="TreeGrafter"/>
</dbReference>
<dbReference type="GO" id="GO:0003911">
    <property type="term" value="F:DNA ligase (NAD+) activity"/>
    <property type="evidence" value="ECO:0007669"/>
    <property type="project" value="UniProtKB-UniRule"/>
</dbReference>
<dbReference type="GO" id="GO:0046872">
    <property type="term" value="F:metal ion binding"/>
    <property type="evidence" value="ECO:0007669"/>
    <property type="project" value="UniProtKB-KW"/>
</dbReference>
<dbReference type="GO" id="GO:0006281">
    <property type="term" value="P:DNA repair"/>
    <property type="evidence" value="ECO:0007669"/>
    <property type="project" value="UniProtKB-KW"/>
</dbReference>
<dbReference type="GO" id="GO:0006260">
    <property type="term" value="P:DNA replication"/>
    <property type="evidence" value="ECO:0007669"/>
    <property type="project" value="UniProtKB-KW"/>
</dbReference>
<dbReference type="CDD" id="cd17748">
    <property type="entry name" value="BRCT_DNA_ligase_like"/>
    <property type="match status" value="1"/>
</dbReference>
<dbReference type="CDD" id="cd00114">
    <property type="entry name" value="LIGANc"/>
    <property type="match status" value="1"/>
</dbReference>
<dbReference type="FunFam" id="1.10.150.20:FF:000006">
    <property type="entry name" value="DNA ligase"/>
    <property type="match status" value="1"/>
</dbReference>
<dbReference type="FunFam" id="2.40.50.140:FF:000012">
    <property type="entry name" value="DNA ligase"/>
    <property type="match status" value="1"/>
</dbReference>
<dbReference type="FunFam" id="3.30.470.30:FF:000001">
    <property type="entry name" value="DNA ligase"/>
    <property type="match status" value="1"/>
</dbReference>
<dbReference type="FunFam" id="3.40.50.10190:FF:000054">
    <property type="entry name" value="DNA ligase"/>
    <property type="match status" value="1"/>
</dbReference>
<dbReference type="Gene3D" id="6.20.10.30">
    <property type="match status" value="1"/>
</dbReference>
<dbReference type="Gene3D" id="1.10.150.20">
    <property type="entry name" value="5' to 3' exonuclease, C-terminal subdomain"/>
    <property type="match status" value="2"/>
</dbReference>
<dbReference type="Gene3D" id="3.40.50.10190">
    <property type="entry name" value="BRCT domain"/>
    <property type="match status" value="1"/>
</dbReference>
<dbReference type="Gene3D" id="3.30.470.30">
    <property type="entry name" value="DNA ligase/mRNA capping enzyme"/>
    <property type="match status" value="1"/>
</dbReference>
<dbReference type="Gene3D" id="1.10.287.610">
    <property type="entry name" value="Helix hairpin bin"/>
    <property type="match status" value="1"/>
</dbReference>
<dbReference type="Gene3D" id="2.40.50.140">
    <property type="entry name" value="Nucleic acid-binding proteins"/>
    <property type="match status" value="1"/>
</dbReference>
<dbReference type="HAMAP" id="MF_01588">
    <property type="entry name" value="DNA_ligase_A"/>
    <property type="match status" value="1"/>
</dbReference>
<dbReference type="InterPro" id="IPR001357">
    <property type="entry name" value="BRCT_dom"/>
</dbReference>
<dbReference type="InterPro" id="IPR036420">
    <property type="entry name" value="BRCT_dom_sf"/>
</dbReference>
<dbReference type="InterPro" id="IPR041663">
    <property type="entry name" value="DisA/LigA_HHH"/>
</dbReference>
<dbReference type="InterPro" id="IPR001679">
    <property type="entry name" value="DNA_ligase"/>
</dbReference>
<dbReference type="InterPro" id="IPR018239">
    <property type="entry name" value="DNA_ligase_AS"/>
</dbReference>
<dbReference type="InterPro" id="IPR033136">
    <property type="entry name" value="DNA_ligase_CS"/>
</dbReference>
<dbReference type="InterPro" id="IPR013839">
    <property type="entry name" value="DNAligase_adenylation"/>
</dbReference>
<dbReference type="InterPro" id="IPR013840">
    <property type="entry name" value="DNAligase_N"/>
</dbReference>
<dbReference type="InterPro" id="IPR012340">
    <property type="entry name" value="NA-bd_OB-fold"/>
</dbReference>
<dbReference type="InterPro" id="IPR004150">
    <property type="entry name" value="NAD_DNA_ligase_OB"/>
</dbReference>
<dbReference type="InterPro" id="IPR010994">
    <property type="entry name" value="RuvA_2-like"/>
</dbReference>
<dbReference type="InterPro" id="IPR004149">
    <property type="entry name" value="Znf_DNAligase_C4"/>
</dbReference>
<dbReference type="NCBIfam" id="TIGR00575">
    <property type="entry name" value="dnlj"/>
    <property type="match status" value="1"/>
</dbReference>
<dbReference type="NCBIfam" id="NF005932">
    <property type="entry name" value="PRK07956.1"/>
    <property type="match status" value="1"/>
</dbReference>
<dbReference type="PANTHER" id="PTHR23389">
    <property type="entry name" value="CHROMOSOME TRANSMISSION FIDELITY FACTOR 18"/>
    <property type="match status" value="1"/>
</dbReference>
<dbReference type="PANTHER" id="PTHR23389:SF9">
    <property type="entry name" value="DNA LIGASE"/>
    <property type="match status" value="1"/>
</dbReference>
<dbReference type="Pfam" id="PF00533">
    <property type="entry name" value="BRCT"/>
    <property type="match status" value="1"/>
</dbReference>
<dbReference type="Pfam" id="PF01653">
    <property type="entry name" value="DNA_ligase_aden"/>
    <property type="match status" value="1"/>
</dbReference>
<dbReference type="Pfam" id="PF03120">
    <property type="entry name" value="DNA_ligase_OB"/>
    <property type="match status" value="1"/>
</dbReference>
<dbReference type="Pfam" id="PF03119">
    <property type="entry name" value="DNA_ligase_ZBD"/>
    <property type="match status" value="1"/>
</dbReference>
<dbReference type="Pfam" id="PF12826">
    <property type="entry name" value="HHH_2"/>
    <property type="match status" value="1"/>
</dbReference>
<dbReference type="PIRSF" id="PIRSF001604">
    <property type="entry name" value="LigA"/>
    <property type="match status" value="1"/>
</dbReference>
<dbReference type="SMART" id="SM00292">
    <property type="entry name" value="BRCT"/>
    <property type="match status" value="1"/>
</dbReference>
<dbReference type="SMART" id="SM00532">
    <property type="entry name" value="LIGANc"/>
    <property type="match status" value="1"/>
</dbReference>
<dbReference type="SUPFAM" id="SSF52113">
    <property type="entry name" value="BRCT domain"/>
    <property type="match status" value="1"/>
</dbReference>
<dbReference type="SUPFAM" id="SSF56091">
    <property type="entry name" value="DNA ligase/mRNA capping enzyme, catalytic domain"/>
    <property type="match status" value="1"/>
</dbReference>
<dbReference type="SUPFAM" id="SSF50249">
    <property type="entry name" value="Nucleic acid-binding proteins"/>
    <property type="match status" value="1"/>
</dbReference>
<dbReference type="SUPFAM" id="SSF47781">
    <property type="entry name" value="RuvA domain 2-like"/>
    <property type="match status" value="1"/>
</dbReference>
<dbReference type="PROSITE" id="PS50172">
    <property type="entry name" value="BRCT"/>
    <property type="match status" value="1"/>
</dbReference>
<dbReference type="PROSITE" id="PS01055">
    <property type="entry name" value="DNA_LIGASE_N1"/>
    <property type="match status" value="1"/>
</dbReference>
<dbReference type="PROSITE" id="PS01056">
    <property type="entry name" value="DNA_LIGASE_N2"/>
    <property type="match status" value="1"/>
</dbReference>
<evidence type="ECO:0000255" key="1">
    <source>
        <dbReference type="HAMAP-Rule" id="MF_01588"/>
    </source>
</evidence>
<evidence type="ECO:0000256" key="2">
    <source>
        <dbReference type="SAM" id="MobiDB-lite"/>
    </source>
</evidence>
<organism>
    <name type="scientific">Renibacterium salmoninarum (strain ATCC 33209 / DSM 20767 / JCM 11484 / NBRC 15589 / NCIMB 2235)</name>
    <dbReference type="NCBI Taxonomy" id="288705"/>
    <lineage>
        <taxon>Bacteria</taxon>
        <taxon>Bacillati</taxon>
        <taxon>Actinomycetota</taxon>
        <taxon>Actinomycetes</taxon>
        <taxon>Micrococcales</taxon>
        <taxon>Micrococcaceae</taxon>
        <taxon>Renibacterium</taxon>
    </lineage>
</organism>
<feature type="chain" id="PRO_0000340372" description="DNA ligase">
    <location>
        <begin position="1"/>
        <end position="758"/>
    </location>
</feature>
<feature type="domain" description="BRCT" evidence="1">
    <location>
        <begin position="660"/>
        <end position="749"/>
    </location>
</feature>
<feature type="region of interest" description="Disordered" evidence="2">
    <location>
        <begin position="1"/>
        <end position="28"/>
    </location>
</feature>
<feature type="region of interest" description="Disordered" evidence="2">
    <location>
        <begin position="735"/>
        <end position="758"/>
    </location>
</feature>
<feature type="active site" description="N6-AMP-lysine intermediate" evidence="1">
    <location>
        <position position="150"/>
    </location>
</feature>
<feature type="binding site" evidence="1">
    <location>
        <begin position="60"/>
        <end position="64"/>
    </location>
    <ligand>
        <name>NAD(+)</name>
        <dbReference type="ChEBI" id="CHEBI:57540"/>
    </ligand>
</feature>
<feature type="binding site" evidence="1">
    <location>
        <begin position="109"/>
        <end position="110"/>
    </location>
    <ligand>
        <name>NAD(+)</name>
        <dbReference type="ChEBI" id="CHEBI:57540"/>
    </ligand>
</feature>
<feature type="binding site" evidence="1">
    <location>
        <position position="148"/>
    </location>
    <ligand>
        <name>NAD(+)</name>
        <dbReference type="ChEBI" id="CHEBI:57540"/>
    </ligand>
</feature>
<feature type="binding site" evidence="1">
    <location>
        <position position="171"/>
    </location>
    <ligand>
        <name>NAD(+)</name>
        <dbReference type="ChEBI" id="CHEBI:57540"/>
    </ligand>
</feature>
<feature type="binding site" evidence="1">
    <location>
        <position position="208"/>
    </location>
    <ligand>
        <name>NAD(+)</name>
        <dbReference type="ChEBI" id="CHEBI:57540"/>
    </ligand>
</feature>
<feature type="binding site" evidence="1">
    <location>
        <position position="324"/>
    </location>
    <ligand>
        <name>NAD(+)</name>
        <dbReference type="ChEBI" id="CHEBI:57540"/>
    </ligand>
</feature>
<feature type="binding site" evidence="1">
    <location>
        <position position="348"/>
    </location>
    <ligand>
        <name>NAD(+)</name>
        <dbReference type="ChEBI" id="CHEBI:57540"/>
    </ligand>
</feature>
<feature type="binding site" evidence="1">
    <location>
        <position position="442"/>
    </location>
    <ligand>
        <name>Zn(2+)</name>
        <dbReference type="ChEBI" id="CHEBI:29105"/>
    </ligand>
</feature>
<feature type="binding site" evidence="1">
    <location>
        <position position="445"/>
    </location>
    <ligand>
        <name>Zn(2+)</name>
        <dbReference type="ChEBI" id="CHEBI:29105"/>
    </ligand>
</feature>
<feature type="binding site" evidence="1">
    <location>
        <position position="461"/>
    </location>
    <ligand>
        <name>Zn(2+)</name>
        <dbReference type="ChEBI" id="CHEBI:29105"/>
    </ligand>
</feature>
<feature type="binding site" evidence="1">
    <location>
        <position position="467"/>
    </location>
    <ligand>
        <name>Zn(2+)</name>
        <dbReference type="ChEBI" id="CHEBI:29105"/>
    </ligand>
</feature>
<keyword id="KW-0227">DNA damage</keyword>
<keyword id="KW-0234">DNA repair</keyword>
<keyword id="KW-0235">DNA replication</keyword>
<keyword id="KW-0436">Ligase</keyword>
<keyword id="KW-0460">Magnesium</keyword>
<keyword id="KW-0464">Manganese</keyword>
<keyword id="KW-0479">Metal-binding</keyword>
<keyword id="KW-0520">NAD</keyword>
<keyword id="KW-1185">Reference proteome</keyword>
<keyword id="KW-0862">Zinc</keyword>
<name>DNLJ_RENSM</name>
<reference key="1">
    <citation type="journal article" date="2008" name="J. Bacteriol.">
        <title>Genome sequence of the fish pathogen Renibacterium salmoninarum suggests reductive evolution away from an environmental Arthrobacter ancestor.</title>
        <authorList>
            <person name="Wiens G.D."/>
            <person name="Rockey D.D."/>
            <person name="Wu Z."/>
            <person name="Chang J."/>
            <person name="Levy R."/>
            <person name="Crane S."/>
            <person name="Chen D.S."/>
            <person name="Capri G.R."/>
            <person name="Burnett J.R."/>
            <person name="Sudheesh P.S."/>
            <person name="Schipma M.J."/>
            <person name="Burd H."/>
            <person name="Bhattacharyya A."/>
            <person name="Rhodes L.D."/>
            <person name="Kaul R."/>
            <person name="Strom M.S."/>
        </authorList>
    </citation>
    <scope>NUCLEOTIDE SEQUENCE [LARGE SCALE GENOMIC DNA]</scope>
    <source>
        <strain>ATCC 33209 / DSM 20767 / JCM 11484 / NBRC 15589 / NCIMB 2235</strain>
    </source>
</reference>
<accession>A9WTZ3</accession>
<sequence>MPENFGAMRQDGLVSTSESDSPAPAATPAATLRAEYSKLVEDIRHYRFAYYNEAESLVSDAEFDVLFRRLEEIEALHPELISNDSPTQEVGGEVSAAFTPVQHTSQIYSLEDVFSIEELQSWIIKAQANAEKLAGSIVAERPLRWLTELKIDGLAVNLLYRNGQLVRAATRGDGITGEDITHNVLTIQEIPRQLRGENLPEEVEIRGEVFIASKDFLALNEQIVGTGRAPFANPRNAAAGSLRQKDPADTAKRPLSMLVHGIGSRIGLDVASQSESYALLKAWGLPTSPYFKVLTGYQEVLDYINHYGEHRHDLLHEIDGIVIKIDDFASQNALGFTSRVPRWAVAYKYPPEEVHTKLLDILVNVGRTGRVTPFGVMEPVKVAGSTVEMATLHNQDVVKAKGVLIGDTVVLRKAGDVIPEIVGPVLALRDGREREFVMPTECPSCGTALAPAKEGDVDIRCPNAKSCPDQLRERVFHLAGRGAFDIEALGWEAAIALTQPAEPELAPVRNEAQIFNLVAEDLALVKIKREKKVKGVLSGVHELVPYFYSKGTEEKPSEPTSNTVKLFIELEKAKAQPLWRVLVALSIRHVGPTASRALATAFGSMAAIRAASEPELAEVDGVGPTIAAALIEWFAEDWHREIIDAWAADGVRMADERDESVRRTLAGLTIVVTGSLEKFNRDQAKEAIINRGGKSAGSVSKNTDYVVAGENAGTKLDKAEKLGVTVLDEAGFETLLAHGPDHSAEAEENESEGSTTND</sequence>
<protein>
    <recommendedName>
        <fullName evidence="1">DNA ligase</fullName>
        <ecNumber evidence="1">6.5.1.2</ecNumber>
    </recommendedName>
    <alternativeName>
        <fullName evidence="1">Polydeoxyribonucleotide synthase [NAD(+)]</fullName>
    </alternativeName>
</protein>